<gene>
    <name type="primary">MCM8</name>
    <name type="ORF">RCJMB04_5o15</name>
</gene>
<feature type="chain" id="PRO_0000419472" description="DNA helicase MCM8">
    <location>
        <begin position="1"/>
        <end position="830"/>
    </location>
</feature>
<feature type="domain" description="MCM">
    <location>
        <begin position="394"/>
        <end position="601"/>
    </location>
</feature>
<feature type="binding site" evidence="1">
    <location>
        <begin position="446"/>
        <end position="453"/>
    </location>
    <ligand>
        <name>ATP</name>
        <dbReference type="ChEBI" id="CHEBI:30616"/>
    </ligand>
</feature>
<feature type="splice variant" id="VSP_044192" description="In isoform 2." evidence="3">
    <location>
        <begin position="1"/>
        <end position="94"/>
    </location>
</feature>
<feature type="splice variant" id="VSP_044193" description="In isoform 2." evidence="3">
    <original>GICGIDEFDKMGSQHQALLEAMEQQSISLAKAGIVCSLPARTSI</original>
    <variation>ESLFCHWRNQDTASASQASCSNMKWKWTLLKGQLGPTSPAVSRI</variation>
    <location>
        <begin position="505"/>
        <end position="548"/>
    </location>
</feature>
<feature type="splice variant" id="VSP_044194" description="In isoform 2." evidence="3">
    <location>
        <begin position="549"/>
        <end position="830"/>
    </location>
</feature>
<feature type="mutagenesis site" description="Loss of function; when associated with A-578." evidence="2">
    <original>K</original>
    <variation>A</variation>
    <location>
        <position position="452"/>
    </location>
</feature>
<feature type="mutagenesis site" description="Loss of function; when associated with A-452." evidence="2">
    <original>R</original>
    <variation>A</variation>
    <location>
        <position position="578"/>
    </location>
</feature>
<feature type="sequence conflict" description="In Ref. 2; CAH65175." evidence="4" ref="2">
    <original>W</original>
    <variation>R</variation>
    <location sequence="I0IUP3-2">
        <position position="417"/>
    </location>
</feature>
<comment type="function">
    <text evidence="2">Component of the MCM8-MCM9 complex, a complex involved in homologous recombination repair following DNA interstrand cross-links and plays a key role during gametogenesis. The MCM8-MCM9 complex probably acts as a hexameric helicase required to process aberrant forks into homologous recombination substrates and to orchestrate homologous recombination with resection, fork stabilization and fork restart.</text>
</comment>
<comment type="catalytic activity">
    <reaction>
        <text>ATP + H2O = ADP + phosphate + H(+)</text>
        <dbReference type="Rhea" id="RHEA:13065"/>
        <dbReference type="ChEBI" id="CHEBI:15377"/>
        <dbReference type="ChEBI" id="CHEBI:15378"/>
        <dbReference type="ChEBI" id="CHEBI:30616"/>
        <dbReference type="ChEBI" id="CHEBI:43474"/>
        <dbReference type="ChEBI" id="CHEBI:456216"/>
        <dbReference type="EC" id="3.6.4.12"/>
    </reaction>
</comment>
<comment type="subunit">
    <text evidence="2">Component of the MCM8-MCM9 complex, which forms a hexamer composed of MCM8 and MCM9.</text>
</comment>
<comment type="subcellular location">
    <subcellularLocation>
        <location evidence="2">Nucleus</location>
    </subcellularLocation>
    <text>Localizes to nuclear foci and colocalizes with RAD51.</text>
</comment>
<comment type="alternative products">
    <event type="alternative splicing"/>
    <isoform>
        <id>I0IUP3-1</id>
        <name>1</name>
        <sequence type="displayed"/>
    </isoform>
    <isoform>
        <id>I0IUP3-2</id>
        <name>2</name>
        <sequence type="described" ref="VSP_044192 VSP_044193 VSP_044194"/>
    </isoform>
</comment>
<comment type="similarity">
    <text evidence="4">Belongs to the MCM family.</text>
</comment>
<organism>
    <name type="scientific">Gallus gallus</name>
    <name type="common">Chicken</name>
    <dbReference type="NCBI Taxonomy" id="9031"/>
    <lineage>
        <taxon>Eukaryota</taxon>
        <taxon>Metazoa</taxon>
        <taxon>Chordata</taxon>
        <taxon>Craniata</taxon>
        <taxon>Vertebrata</taxon>
        <taxon>Euteleostomi</taxon>
        <taxon>Archelosauria</taxon>
        <taxon>Archosauria</taxon>
        <taxon>Dinosauria</taxon>
        <taxon>Saurischia</taxon>
        <taxon>Theropoda</taxon>
        <taxon>Coelurosauria</taxon>
        <taxon>Aves</taxon>
        <taxon>Neognathae</taxon>
        <taxon>Galloanserae</taxon>
        <taxon>Galliformes</taxon>
        <taxon>Phasianidae</taxon>
        <taxon>Phasianinae</taxon>
        <taxon>Gallus</taxon>
    </lineage>
</organism>
<keyword id="KW-0002">3D-structure</keyword>
<keyword id="KW-0025">Alternative splicing</keyword>
<keyword id="KW-0067">ATP-binding</keyword>
<keyword id="KW-0227">DNA damage</keyword>
<keyword id="KW-0234">DNA repair</keyword>
<keyword id="KW-0238">DNA-binding</keyword>
<keyword id="KW-0347">Helicase</keyword>
<keyword id="KW-0378">Hydrolase</keyword>
<keyword id="KW-0547">Nucleotide-binding</keyword>
<keyword id="KW-0539">Nucleus</keyword>
<keyword id="KW-1185">Reference proteome</keyword>
<proteinExistence type="evidence at protein level"/>
<protein>
    <recommendedName>
        <fullName>DNA helicase MCM8</fullName>
        <ecNumber>3.6.4.12</ecNumber>
    </recommendedName>
    <alternativeName>
        <fullName>Minichromosome maintenance 8</fullName>
    </alternativeName>
</protein>
<sequence length="830" mass="92809">MSRDLRGRGCPRGRGFQGWRGGWRGGWRGGWRGGWRGRTQKVEWKRAPEPASSRLVQSTLDQFIPYKGWKLYFSEAYADKSPFVQKTQAFEKFFMQRIELYDKDEIERKGSILVDYKELIEDRELTKSIPNISTELRDMPQKILQCMGLAIHQVLTKDLERHAAELQVQEGLPLDGEPIINVPLIHARLYNYEPLTQLKNVRANCYGKYIALRGTVVRVSNIKPLCTKLAFVCGTCGDVQSVPLPDGKYTLPTKCLVPECRGRSFTPDRSSPLTATVDWQSVKVQELMSDDQREAGRIPRTIECELVQDLVDSCVPGDVVTITGVVKVSSTEEGASKNKNDKCVFLLYIEANSVSNSKGQKTKNFEEETFQRSFMEFSLKDLYAVQEIQAEENLFRIIVNSLCPAIYGHEIVKAGLALALFGGCQKFVDDKNRIPVRGDPHVLIVGDPGLGKSQMLQAVCNVAPRGVYVCGNTSTSSGLTVTLSRDGASGDFALEAGALVLGDQGICGIDEFDKMGSQHQALLEAMEQQSISLAKAGIVCSLPARTSIVAAANPVGGHYNKAKTVSENLKMGSALLSRFDLVFILLDTPNEDHDHLLSEHVMAIRAGKQAVCSSAVVSRTNVQDRSVLEVVSDRPLLERLKISPGENFDAIPHQLLRKYVGYARQYVHPHLSPEAAQVLQEFYLELRKQNQGASSTPITTRQLESLIRLTEARSRLELREKCTKEDAEDVIEIMKYSMLGTYSDEFGKLDFERSQHGSGMSNRSQAKRFVSALSSIAERTYSNLFDLQQLRQVAKELQIRVFDFESFIESLNDQGYLLKKGSRLYQLQTM</sequence>
<reference key="1">
    <citation type="journal article" date="2012" name="Mol. Cell">
        <title>Mcm8 and Mcm9 form a complex that functions in homologous recombination repair induced by DNA interstrand crosslinks.</title>
        <authorList>
            <person name="Nishimura K."/>
            <person name="Ishiai M."/>
            <person name="Horikawa K."/>
            <person name="Fukagawa T."/>
            <person name="Takata M."/>
            <person name="Takisawa H."/>
            <person name="Kanemaki M.T."/>
        </authorList>
    </citation>
    <scope>NUCLEOTIDE SEQUENCE [MRNA] (ISOFORM 1)</scope>
    <scope>FUNCTION</scope>
    <scope>IDENTIFICATION IN THE MCM8-MCM9 COMPLEX</scope>
    <scope>SUBCELLULAR LOCATION</scope>
    <scope>MUTAGENESIS OF LYS-452 AND ARG-578</scope>
</reference>
<reference key="2">
    <citation type="journal article" date="2005" name="Genome Biol.">
        <title>Full-length cDNAs from chicken bursal lymphocytes to facilitate gene function analysis.</title>
        <authorList>
            <person name="Caldwell R.B."/>
            <person name="Kierzek A.M."/>
            <person name="Arakawa H."/>
            <person name="Bezzubov Y."/>
            <person name="Zaim J."/>
            <person name="Fiedler P."/>
            <person name="Kutter S."/>
            <person name="Blagodatski A."/>
            <person name="Kostovska D."/>
            <person name="Koter M."/>
            <person name="Plachy J."/>
            <person name="Carninci P."/>
            <person name="Hayashizaki Y."/>
            <person name="Buerstedde J.-M."/>
        </authorList>
    </citation>
    <scope>NUCLEOTIDE SEQUENCE [LARGE SCALE MRNA] (ISOFORM 2)</scope>
    <source>
        <strain>CB</strain>
        <tissue>Bursa of Fabricius</tissue>
    </source>
</reference>
<reference key="3">
    <citation type="journal article" date="2004" name="Nature">
        <title>Sequence and comparative analysis of the chicken genome provide unique perspectives on vertebrate evolution.</title>
        <authorList>
            <person name="Hillier L.W."/>
            <person name="Miller W."/>
            <person name="Birney E."/>
            <person name="Warren W."/>
            <person name="Hardison R.C."/>
            <person name="Ponting C.P."/>
            <person name="Bork P."/>
            <person name="Burt D.W."/>
            <person name="Groenen M.A.M."/>
            <person name="Delany M.E."/>
            <person name="Dodgson J.B."/>
            <person name="Chinwalla A.T."/>
            <person name="Cliften P.F."/>
            <person name="Clifton S.W."/>
            <person name="Delehaunty K.D."/>
            <person name="Fronick C."/>
            <person name="Fulton R.S."/>
            <person name="Graves T.A."/>
            <person name="Kremitzki C."/>
            <person name="Layman D."/>
            <person name="Magrini V."/>
            <person name="McPherson J.D."/>
            <person name="Miner T.L."/>
            <person name="Minx P."/>
            <person name="Nash W.E."/>
            <person name="Nhan M.N."/>
            <person name="Nelson J.O."/>
            <person name="Oddy L.G."/>
            <person name="Pohl C.S."/>
            <person name="Randall-Maher J."/>
            <person name="Smith S.M."/>
            <person name="Wallis J.W."/>
            <person name="Yang S.-P."/>
            <person name="Romanov M.N."/>
            <person name="Rondelli C.M."/>
            <person name="Paton B."/>
            <person name="Smith J."/>
            <person name="Morrice D."/>
            <person name="Daniels L."/>
            <person name="Tempest H.G."/>
            <person name="Robertson L."/>
            <person name="Masabanda J.S."/>
            <person name="Griffin D.K."/>
            <person name="Vignal A."/>
            <person name="Fillon V."/>
            <person name="Jacobbson L."/>
            <person name="Kerje S."/>
            <person name="Andersson L."/>
            <person name="Crooijmans R.P."/>
            <person name="Aerts J."/>
            <person name="van der Poel J.J."/>
            <person name="Ellegren H."/>
            <person name="Caldwell R.B."/>
            <person name="Hubbard S.J."/>
            <person name="Grafham D.V."/>
            <person name="Kierzek A.M."/>
            <person name="McLaren S.R."/>
            <person name="Overton I.M."/>
            <person name="Arakawa H."/>
            <person name="Beattie K.J."/>
            <person name="Bezzubov Y."/>
            <person name="Boardman P.E."/>
            <person name="Bonfield J.K."/>
            <person name="Croning M.D.R."/>
            <person name="Davies R.M."/>
            <person name="Francis M.D."/>
            <person name="Humphray S.J."/>
            <person name="Scott C.E."/>
            <person name="Taylor R.G."/>
            <person name="Tickle C."/>
            <person name="Brown W.R.A."/>
            <person name="Rogers J."/>
            <person name="Buerstedde J.-M."/>
            <person name="Wilson S.A."/>
            <person name="Stubbs L."/>
            <person name="Ovcharenko I."/>
            <person name="Gordon L."/>
            <person name="Lucas S."/>
            <person name="Miller M.M."/>
            <person name="Inoko H."/>
            <person name="Shiina T."/>
            <person name="Kaufman J."/>
            <person name="Salomonsen J."/>
            <person name="Skjoedt K."/>
            <person name="Wong G.K.-S."/>
            <person name="Wang J."/>
            <person name="Liu B."/>
            <person name="Wang J."/>
            <person name="Yu J."/>
            <person name="Yang H."/>
            <person name="Nefedov M."/>
            <person name="Koriabine M."/>
            <person name="Dejong P.J."/>
            <person name="Goodstadt L."/>
            <person name="Webber C."/>
            <person name="Dickens N.J."/>
            <person name="Letunic I."/>
            <person name="Suyama M."/>
            <person name="Torrents D."/>
            <person name="von Mering C."/>
            <person name="Zdobnov E.M."/>
            <person name="Makova K."/>
            <person name="Nekrutenko A."/>
            <person name="Elnitski L."/>
            <person name="Eswara P."/>
            <person name="King D.C."/>
            <person name="Yang S.-P."/>
            <person name="Tyekucheva S."/>
            <person name="Radakrishnan A."/>
            <person name="Harris R.S."/>
            <person name="Chiaromonte F."/>
            <person name="Taylor J."/>
            <person name="He J."/>
            <person name="Rijnkels M."/>
            <person name="Griffiths-Jones S."/>
            <person name="Ureta-Vidal A."/>
            <person name="Hoffman M.M."/>
            <person name="Severin J."/>
            <person name="Searle S.M.J."/>
            <person name="Law A.S."/>
            <person name="Speed D."/>
            <person name="Waddington D."/>
            <person name="Cheng Z."/>
            <person name="Tuzun E."/>
            <person name="Eichler E."/>
            <person name="Bao Z."/>
            <person name="Flicek P."/>
            <person name="Shteynberg D.D."/>
            <person name="Brent M.R."/>
            <person name="Bye J.M."/>
            <person name="Huckle E.J."/>
            <person name="Chatterji S."/>
            <person name="Dewey C."/>
            <person name="Pachter L."/>
            <person name="Kouranov A."/>
            <person name="Mourelatos Z."/>
            <person name="Hatzigeorgiou A.G."/>
            <person name="Paterson A.H."/>
            <person name="Ivarie R."/>
            <person name="Brandstrom M."/>
            <person name="Axelsson E."/>
            <person name="Backstrom N."/>
            <person name="Berlin S."/>
            <person name="Webster M.T."/>
            <person name="Pourquie O."/>
            <person name="Reymond A."/>
            <person name="Ucla C."/>
            <person name="Antonarakis S.E."/>
            <person name="Long M."/>
            <person name="Emerson J.J."/>
            <person name="Betran E."/>
            <person name="Dupanloup I."/>
            <person name="Kaessmann H."/>
            <person name="Hinrichs A.S."/>
            <person name="Bejerano G."/>
            <person name="Furey T.S."/>
            <person name="Harte R.A."/>
            <person name="Raney B."/>
            <person name="Siepel A."/>
            <person name="Kent W.J."/>
            <person name="Haussler D."/>
            <person name="Eyras E."/>
            <person name="Castelo R."/>
            <person name="Abril J.F."/>
            <person name="Castellano S."/>
            <person name="Camara F."/>
            <person name="Parra G."/>
            <person name="Guigo R."/>
            <person name="Bourque G."/>
            <person name="Tesler G."/>
            <person name="Pevzner P.A."/>
            <person name="Smit A."/>
            <person name="Fulton L.A."/>
            <person name="Mardis E.R."/>
            <person name="Wilson R.K."/>
        </authorList>
    </citation>
    <scope>NUCLEOTIDE SEQUENCE [LARGE SCALE GENOMIC DNA]</scope>
    <source>
        <strain>Red jungle fowl</strain>
    </source>
</reference>
<name>MCM8_CHICK</name>
<evidence type="ECO:0000255" key="1"/>
<evidence type="ECO:0000269" key="2">
    <source>
    </source>
</evidence>
<evidence type="ECO:0000303" key="3">
    <source>
    </source>
</evidence>
<evidence type="ECO:0000305" key="4"/>
<accession>I0IUP3</accession>
<accession>E1BWN1</accession>
<accession>F1NEZ3</accession>
<accession>Q5F3V9</accession>
<dbReference type="EC" id="3.6.4.12"/>
<dbReference type="EMBL" id="AB689140">
    <property type="protein sequence ID" value="BAM08992.1"/>
    <property type="molecule type" value="mRNA"/>
</dbReference>
<dbReference type="EMBL" id="AJ851541">
    <property type="protein sequence ID" value="CAH65175.1"/>
    <property type="molecule type" value="mRNA"/>
</dbReference>
<dbReference type="EMBL" id="AADN02012184">
    <property type="status" value="NOT_ANNOTATED_CDS"/>
    <property type="molecule type" value="Genomic_DNA"/>
</dbReference>
<dbReference type="EMBL" id="AADN02012185">
    <property type="status" value="NOT_ANNOTATED_CDS"/>
    <property type="molecule type" value="Genomic_DNA"/>
</dbReference>
<dbReference type="RefSeq" id="NP_001280098.1">
    <property type="nucleotide sequence ID" value="NM_001293169.1"/>
</dbReference>
<dbReference type="PDB" id="7W7P">
    <property type="method" value="EM"/>
    <property type="resolution" value="3.67 A"/>
    <property type="chains" value="B/D/F=51-358"/>
</dbReference>
<dbReference type="PDBsum" id="7W7P"/>
<dbReference type="EMDB" id="EMD-32346"/>
<dbReference type="SMR" id="I0IUP3"/>
<dbReference type="FunCoup" id="I0IUP3">
    <property type="interactions" value="1236"/>
</dbReference>
<dbReference type="STRING" id="9031.ENSGALP00000014959"/>
<dbReference type="PaxDb" id="9031-ENSGALP00000014959"/>
<dbReference type="GeneID" id="421314"/>
<dbReference type="KEGG" id="gga:421314"/>
<dbReference type="CTD" id="84515"/>
<dbReference type="VEuPathDB" id="HostDB:geneid_421314"/>
<dbReference type="eggNOG" id="KOG0480">
    <property type="taxonomic scope" value="Eukaryota"/>
</dbReference>
<dbReference type="HOGENOM" id="CLU_000995_7_2_1"/>
<dbReference type="InParanoid" id="I0IUP3"/>
<dbReference type="OrthoDB" id="422555at2759"/>
<dbReference type="Reactome" id="R-GGA-176187">
    <property type="pathway name" value="Activation of ATR in response to replication stress"/>
</dbReference>
<dbReference type="Reactome" id="R-GGA-68689">
    <property type="pathway name" value="CDC6 association with the ORC:origin complex"/>
</dbReference>
<dbReference type="Reactome" id="R-GGA-68949">
    <property type="pathway name" value="Orc1 removal from chromatin"/>
</dbReference>
<dbReference type="Reactome" id="R-GGA-68962">
    <property type="pathway name" value="Activation of the pre-replicative complex"/>
</dbReference>
<dbReference type="PRO" id="PR:I0IUP3"/>
<dbReference type="Proteomes" id="UP000000539">
    <property type="component" value="Chromosome 3"/>
</dbReference>
<dbReference type="Bgee" id="ENSGALG00000009195">
    <property type="expression patterns" value="Expressed in spermatid and 13 other cell types or tissues"/>
</dbReference>
<dbReference type="GO" id="GO:0042555">
    <property type="term" value="C:MCM complex"/>
    <property type="evidence" value="ECO:0000318"/>
    <property type="project" value="GO_Central"/>
</dbReference>
<dbReference type="GO" id="GO:0097362">
    <property type="term" value="C:MCM8-MCM9 complex"/>
    <property type="evidence" value="ECO:0000314"/>
    <property type="project" value="UniProtKB"/>
</dbReference>
<dbReference type="GO" id="GO:0005634">
    <property type="term" value="C:nucleus"/>
    <property type="evidence" value="ECO:0000314"/>
    <property type="project" value="UniProtKB"/>
</dbReference>
<dbReference type="GO" id="GO:0005524">
    <property type="term" value="F:ATP binding"/>
    <property type="evidence" value="ECO:0007669"/>
    <property type="project" value="UniProtKB-KW"/>
</dbReference>
<dbReference type="GO" id="GO:0016887">
    <property type="term" value="F:ATP hydrolysis activity"/>
    <property type="evidence" value="ECO:0007669"/>
    <property type="project" value="InterPro"/>
</dbReference>
<dbReference type="GO" id="GO:0004386">
    <property type="term" value="F:helicase activity"/>
    <property type="evidence" value="ECO:0007669"/>
    <property type="project" value="UniProtKB-KW"/>
</dbReference>
<dbReference type="GO" id="GO:0003697">
    <property type="term" value="F:single-stranded DNA binding"/>
    <property type="evidence" value="ECO:0000318"/>
    <property type="project" value="GO_Central"/>
</dbReference>
<dbReference type="GO" id="GO:0006974">
    <property type="term" value="P:DNA damage response"/>
    <property type="evidence" value="ECO:0000314"/>
    <property type="project" value="UniProtKB"/>
</dbReference>
<dbReference type="GO" id="GO:0000724">
    <property type="term" value="P:double-strand break repair via homologous recombination"/>
    <property type="evidence" value="ECO:0000314"/>
    <property type="project" value="UniProtKB"/>
</dbReference>
<dbReference type="CDD" id="cd17759">
    <property type="entry name" value="MCM8"/>
    <property type="match status" value="1"/>
</dbReference>
<dbReference type="CDD" id="cd22247">
    <property type="entry name" value="MCM8_WHD"/>
    <property type="match status" value="1"/>
</dbReference>
<dbReference type="FunFam" id="2.20.28.10:FF:000007">
    <property type="entry name" value="DNA helicase MCM8 isoform X1"/>
    <property type="match status" value="1"/>
</dbReference>
<dbReference type="Gene3D" id="2.20.28.10">
    <property type="match status" value="1"/>
</dbReference>
<dbReference type="Gene3D" id="2.40.50.140">
    <property type="entry name" value="Nucleic acid-binding proteins"/>
    <property type="match status" value="1"/>
</dbReference>
<dbReference type="Gene3D" id="3.40.50.300">
    <property type="entry name" value="P-loop containing nucleotide triphosphate hydrolases"/>
    <property type="match status" value="1"/>
</dbReference>
<dbReference type="InterPro" id="IPR003593">
    <property type="entry name" value="AAA+_ATPase"/>
</dbReference>
<dbReference type="InterPro" id="IPR031327">
    <property type="entry name" value="MCM"/>
</dbReference>
<dbReference type="InterPro" id="IPR056875">
    <property type="entry name" value="MCM8/REC_WHD"/>
</dbReference>
<dbReference type="InterPro" id="IPR001208">
    <property type="entry name" value="MCM_dom"/>
</dbReference>
<dbReference type="InterPro" id="IPR041562">
    <property type="entry name" value="MCM_lid"/>
</dbReference>
<dbReference type="InterPro" id="IPR033762">
    <property type="entry name" value="MCM_OB"/>
</dbReference>
<dbReference type="InterPro" id="IPR012340">
    <property type="entry name" value="NA-bd_OB-fold"/>
</dbReference>
<dbReference type="InterPro" id="IPR027417">
    <property type="entry name" value="P-loop_NTPase"/>
</dbReference>
<dbReference type="PANTHER" id="PTHR11630:SF47">
    <property type="entry name" value="DNA HELICASE MCM8"/>
    <property type="match status" value="1"/>
</dbReference>
<dbReference type="PANTHER" id="PTHR11630">
    <property type="entry name" value="DNA REPLICATION LICENSING FACTOR MCM FAMILY MEMBER"/>
    <property type="match status" value="1"/>
</dbReference>
<dbReference type="Pfam" id="PF00493">
    <property type="entry name" value="MCM"/>
    <property type="match status" value="1"/>
</dbReference>
<dbReference type="Pfam" id="PF17855">
    <property type="entry name" value="MCM_lid"/>
    <property type="match status" value="1"/>
</dbReference>
<dbReference type="Pfam" id="PF17207">
    <property type="entry name" value="MCM_OB"/>
    <property type="match status" value="1"/>
</dbReference>
<dbReference type="Pfam" id="PF25051">
    <property type="entry name" value="WHD_MCM8"/>
    <property type="match status" value="1"/>
</dbReference>
<dbReference type="PRINTS" id="PR01657">
    <property type="entry name" value="MCMFAMILY"/>
</dbReference>
<dbReference type="SMART" id="SM00382">
    <property type="entry name" value="AAA"/>
    <property type="match status" value="1"/>
</dbReference>
<dbReference type="SMART" id="SM00350">
    <property type="entry name" value="MCM"/>
    <property type="match status" value="1"/>
</dbReference>
<dbReference type="SUPFAM" id="SSF50249">
    <property type="entry name" value="Nucleic acid-binding proteins"/>
    <property type="match status" value="1"/>
</dbReference>
<dbReference type="SUPFAM" id="SSF52540">
    <property type="entry name" value="P-loop containing nucleoside triphosphate hydrolases"/>
    <property type="match status" value="1"/>
</dbReference>
<dbReference type="PROSITE" id="PS50051">
    <property type="entry name" value="MCM_2"/>
    <property type="match status" value="1"/>
</dbReference>